<name>DNLI_BPT4</name>
<organism>
    <name type="scientific">Enterobacteria phage T4</name>
    <name type="common">Bacteriophage T4</name>
    <dbReference type="NCBI Taxonomy" id="10665"/>
    <lineage>
        <taxon>Viruses</taxon>
        <taxon>Duplodnaviria</taxon>
        <taxon>Heunggongvirae</taxon>
        <taxon>Uroviricota</taxon>
        <taxon>Caudoviricetes</taxon>
        <taxon>Straboviridae</taxon>
        <taxon>Tevenvirinae</taxon>
        <taxon>Tequatrovirus</taxon>
    </lineage>
</organism>
<reference key="1">
    <citation type="journal article" date="1983" name="Nucleic Acids Res.">
        <title>Primary structure and genetic organization of phage T4 DNA ligase.</title>
        <authorList>
            <person name="Armstrong J."/>
            <person name="Brown R.S."/>
            <person name="Tsugita A."/>
        </authorList>
    </citation>
    <scope>NUCLEOTIDE SEQUENCE [GENOMIC DNA]</scope>
</reference>
<reference key="2">
    <citation type="journal article" date="2003" name="Microbiol. Mol. Biol. Rev.">
        <title>Bacteriophage T4 genome.</title>
        <authorList>
            <person name="Miller E.S."/>
            <person name="Kutter E."/>
            <person name="Mosig G."/>
            <person name="Arisaka F."/>
            <person name="Kunisawa T."/>
            <person name="Ruger W."/>
        </authorList>
    </citation>
    <scope>NUCLEOTIDE SEQUENCE [LARGE SCALE GENOMIC DNA]</scope>
</reference>
<reference evidence="5 6 7" key="3">
    <citation type="journal article" date="2018" name="Nucleic Acids Res.">
        <title>T4 DNA ligase structure reveals a prototypical ATP-dependent ligase with a unique mode of sliding clamp interaction.</title>
        <authorList>
            <person name="Shi K."/>
            <person name="Bohl T.E."/>
            <person name="Park J."/>
            <person name="Zasada A."/>
            <person name="Malik S."/>
            <person name="Banerjee S."/>
            <person name="Tran V."/>
            <person name="Li N."/>
            <person name="Yin Z."/>
            <person name="Kurniawan F."/>
            <person name="Orellana K."/>
            <person name="Aihara H."/>
        </authorList>
    </citation>
    <scope>X-RAY CRYSTALLOGRAPHY (1.40 ANGSTROMS) OF 1-129 IN COMPLEX WITH DNA</scope>
    <scope>INTERACTION WITH THE VIRAL SLIDING CLAMP</scope>
</reference>
<sequence length="487" mass="55293">MILKILNEIASIGSTKQKQAILEKNKDNELLKRVYRLTYSRGLQYYIKKWPKPGIATQSFGMLTLTDMLDFIEFTLATRKLTGNAAIEELTGYITDGKKDDVEVLRRVMMRDLECGASVSIANKVWPGLIPEQPQMLASSYDEKGINKNIKFPAFAQLKADGARCFAEVRGDELDDVRLLSRAGNEYLGLDLLKEELIKMTAEARQIHPEGVLIDGELVYHEQVKKEPEGLDFLFDAYPENSKAKEFAEVAESRTASNGIANKSLKGTISEKEAQCMKFQVWDYVPLVEIYSLPAFRLKYDVRFSKLEQMTSGYDKVILIENQVVNNLDEAKVIYKKYIDQGLEGIILKNIDGLWENARSKNLYKFKEVIDVDLKIVGIYPHRKDPTKAGGFILESECGKIKVNAGSGLKDKAGVKSHELDRTRIMENQNYYIGKILECECNGWLKSDGRTDYVKLFLPIAIRLREDKTKANTFEDVFGDFHEVTGL</sequence>
<keyword id="KW-0002">3D-structure</keyword>
<keyword id="KW-0067">ATP-binding</keyword>
<keyword id="KW-0227">DNA damage</keyword>
<keyword id="KW-0233">DNA recombination</keyword>
<keyword id="KW-0234">DNA repair</keyword>
<keyword id="KW-0235">DNA replication</keyword>
<keyword id="KW-0436">Ligase</keyword>
<keyword id="KW-0479">Metal-binding</keyword>
<keyword id="KW-0547">Nucleotide-binding</keyword>
<keyword id="KW-1185">Reference proteome</keyword>
<proteinExistence type="evidence at protein level"/>
<comment type="function">
    <text>DNA ligase, which is expressed in the early stage of lytic development, has been implicated in T4 DNA synthesis and genetic recombination. It may also play a role in T4 DNA repair.</text>
</comment>
<comment type="catalytic activity">
    <reaction evidence="2">
        <text>ATP + (deoxyribonucleotide)n-3'-hydroxyl + 5'-phospho-(deoxyribonucleotide)m = (deoxyribonucleotide)n+m + AMP + diphosphate.</text>
        <dbReference type="EC" id="6.5.1.1"/>
    </reaction>
</comment>
<comment type="cofactor">
    <cofactor evidence="1">
        <name>a divalent metal cation</name>
        <dbReference type="ChEBI" id="CHEBI:60240"/>
    </cofactor>
</comment>
<comment type="subunit">
    <text evidence="3">Interacts with the sliding clamp.</text>
</comment>
<comment type="similarity">
    <text evidence="4">Belongs to the ATP-dependent DNA ligase family.</text>
</comment>
<feature type="chain" id="PRO_0000059595" description="DNA ligase">
    <location>
        <begin position="1"/>
        <end position="487"/>
    </location>
</feature>
<feature type="region of interest" description="Interaction with the sliding clamp" evidence="3">
    <location>
        <begin position="229"/>
        <end position="237"/>
    </location>
</feature>
<feature type="active site" description="N6-AMP-lysine intermediate" evidence="2">
    <location>
        <position position="159"/>
    </location>
</feature>
<feature type="binding site" evidence="1">
    <location>
        <position position="164"/>
    </location>
    <ligand>
        <name>ATP</name>
        <dbReference type="ChEBI" id="CHEBI:30616"/>
    </ligand>
</feature>
<feature type="binding site" evidence="1">
    <location>
        <position position="182"/>
    </location>
    <ligand>
        <name>ATP</name>
        <dbReference type="ChEBI" id="CHEBI:30616"/>
    </ligand>
</feature>
<feature type="binding site" evidence="1">
    <location>
        <position position="217"/>
    </location>
    <ligand>
        <name>a divalent metal cation</name>
        <dbReference type="ChEBI" id="CHEBI:60240"/>
        <label>1</label>
    </ligand>
</feature>
<feature type="binding site" evidence="1">
    <location>
        <position position="217"/>
    </location>
    <ligand>
        <name>ATP</name>
        <dbReference type="ChEBI" id="CHEBI:30616"/>
    </ligand>
</feature>
<feature type="binding site" evidence="1">
    <location>
        <position position="344"/>
    </location>
    <ligand>
        <name>a divalent metal cation</name>
        <dbReference type="ChEBI" id="CHEBI:60240"/>
        <label>2</label>
    </ligand>
</feature>
<feature type="binding site" evidence="1">
    <location>
        <position position="359"/>
    </location>
    <ligand>
        <name>ATP</name>
        <dbReference type="ChEBI" id="CHEBI:30616"/>
    </ligand>
</feature>
<feature type="binding site" evidence="1">
    <location>
        <position position="365"/>
    </location>
    <ligand>
        <name>ATP</name>
        <dbReference type="ChEBI" id="CHEBI:30616"/>
    </ligand>
</feature>
<feature type="helix" evidence="8">
    <location>
        <begin position="2"/>
        <end position="10"/>
    </location>
</feature>
<feature type="helix" evidence="8">
    <location>
        <begin position="15"/>
        <end position="24"/>
    </location>
</feature>
<feature type="turn" evidence="8">
    <location>
        <begin position="25"/>
        <end position="27"/>
    </location>
</feature>
<feature type="helix" evidence="8">
    <location>
        <begin position="29"/>
        <end position="39"/>
    </location>
</feature>
<feature type="turn" evidence="8">
    <location>
        <begin position="58"/>
        <end position="61"/>
    </location>
</feature>
<feature type="helix" evidence="8">
    <location>
        <begin position="65"/>
        <end position="74"/>
    </location>
</feature>
<feature type="turn" evidence="8">
    <location>
        <begin position="75"/>
        <end position="79"/>
    </location>
</feature>
<feature type="helix" evidence="8">
    <location>
        <begin position="83"/>
        <end position="96"/>
    </location>
</feature>
<feature type="helix" evidence="8">
    <location>
        <begin position="99"/>
        <end position="110"/>
    </location>
</feature>
<feature type="strand" evidence="8">
    <location>
        <begin position="114"/>
        <end position="116"/>
    </location>
</feature>
<feature type="helix" evidence="8">
    <location>
        <begin position="119"/>
        <end position="125"/>
    </location>
</feature>
<feature type="strand" evidence="10">
    <location>
        <begin position="137"/>
        <end position="139"/>
    </location>
</feature>
<feature type="helix" evidence="10">
    <location>
        <begin position="143"/>
        <end position="149"/>
    </location>
</feature>
<feature type="strand" evidence="10">
    <location>
        <begin position="152"/>
        <end position="158"/>
    </location>
</feature>
<feature type="strand" evidence="10">
    <location>
        <begin position="162"/>
        <end position="169"/>
    </location>
</feature>
<feature type="strand" evidence="10">
    <location>
        <begin position="171"/>
        <end position="173"/>
    </location>
</feature>
<feature type="helix" evidence="10">
    <location>
        <begin position="174"/>
        <end position="176"/>
    </location>
</feature>
<feature type="strand" evidence="10">
    <location>
        <begin position="177"/>
        <end position="180"/>
    </location>
</feature>
<feature type="helix" evidence="10">
    <location>
        <begin position="191"/>
        <end position="200"/>
    </location>
</feature>
<feature type="helix" evidence="10">
    <location>
        <begin position="202"/>
        <end position="207"/>
    </location>
</feature>
<feature type="strand" evidence="10">
    <location>
        <begin position="212"/>
        <end position="222"/>
    </location>
</feature>
<feature type="helix" evidence="9">
    <location>
        <begin position="232"/>
        <end position="235"/>
    </location>
</feature>
<feature type="helix" evidence="10">
    <location>
        <begin position="254"/>
        <end position="265"/>
    </location>
</feature>
<feature type="helix" evidence="10">
    <location>
        <begin position="271"/>
        <end position="275"/>
    </location>
</feature>
<feature type="strand" evidence="10">
    <location>
        <begin position="277"/>
        <end position="286"/>
    </location>
</feature>
<feature type="helix" evidence="10">
    <location>
        <begin position="287"/>
        <end position="291"/>
    </location>
</feature>
<feature type="helix" evidence="10">
    <location>
        <begin position="300"/>
        <end position="310"/>
    </location>
</feature>
<feature type="turn" evidence="10">
    <location>
        <begin position="311"/>
        <end position="313"/>
    </location>
</feature>
<feature type="strand" evidence="10">
    <location>
        <begin position="315"/>
        <end position="319"/>
    </location>
</feature>
<feature type="strand" evidence="10">
    <location>
        <begin position="322"/>
        <end position="327"/>
    </location>
</feature>
<feature type="helix" evidence="10">
    <location>
        <begin position="328"/>
        <end position="340"/>
    </location>
</feature>
<feature type="strand" evidence="10">
    <location>
        <begin position="345"/>
        <end position="349"/>
    </location>
</feature>
<feature type="strand" evidence="10">
    <location>
        <begin position="357"/>
        <end position="367"/>
    </location>
</feature>
<feature type="strand" evidence="10">
    <location>
        <begin position="370"/>
        <end position="381"/>
    </location>
</feature>
<feature type="strand" evidence="10">
    <location>
        <begin position="388"/>
        <end position="395"/>
    </location>
</feature>
<feature type="strand" evidence="10">
    <location>
        <begin position="399"/>
        <end position="405"/>
    </location>
</feature>
<feature type="helix" evidence="10">
    <location>
        <begin position="422"/>
        <end position="427"/>
    </location>
</feature>
<feature type="helix" evidence="10">
    <location>
        <begin position="429"/>
        <end position="432"/>
    </location>
</feature>
<feature type="strand" evidence="10">
    <location>
        <begin position="436"/>
        <end position="445"/>
    </location>
</feature>
<feature type="strand" evidence="10">
    <location>
        <begin position="454"/>
        <end position="458"/>
    </location>
</feature>
<feature type="strand" evidence="10">
    <location>
        <begin position="460"/>
        <end position="464"/>
    </location>
</feature>
<feature type="helix" evidence="10">
    <location>
        <begin position="474"/>
        <end position="478"/>
    </location>
</feature>
<feature type="helix" evidence="10">
    <location>
        <begin position="481"/>
        <end position="485"/>
    </location>
</feature>
<protein>
    <recommendedName>
        <fullName>DNA ligase</fullName>
        <ecNumber evidence="2">6.5.1.1</ecNumber>
    </recommendedName>
    <alternativeName>
        <fullName>Polydeoxyribonucleotide synthase [ATP]</fullName>
    </alternativeName>
</protein>
<accession>P00970</accession>
<gene>
    <name type="primary">30</name>
</gene>
<organismHost>
    <name type="scientific">Escherichia coli</name>
    <dbReference type="NCBI Taxonomy" id="562"/>
</organismHost>
<evidence type="ECO:0000250" key="1"/>
<evidence type="ECO:0000255" key="2">
    <source>
        <dbReference type="PROSITE-ProRule" id="PRU10135"/>
    </source>
</evidence>
<evidence type="ECO:0000269" key="3">
    <source>
    </source>
</evidence>
<evidence type="ECO:0000305" key="4"/>
<evidence type="ECO:0007744" key="5">
    <source>
        <dbReference type="PDB" id="5WFY"/>
    </source>
</evidence>
<evidence type="ECO:0007744" key="6">
    <source>
        <dbReference type="PDB" id="6DRT"/>
    </source>
</evidence>
<evidence type="ECO:0007744" key="7">
    <source>
        <dbReference type="PDB" id="6DT1"/>
    </source>
</evidence>
<evidence type="ECO:0007829" key="8">
    <source>
        <dbReference type="PDB" id="5WFY"/>
    </source>
</evidence>
<evidence type="ECO:0007829" key="9">
    <source>
        <dbReference type="PDB" id="6DRT"/>
    </source>
</evidence>
<evidence type="ECO:0007829" key="10">
    <source>
        <dbReference type="PDB" id="6DT1"/>
    </source>
</evidence>
<dbReference type="EC" id="6.5.1.1" evidence="2"/>
<dbReference type="EMBL" id="X00039">
    <property type="protein sequence ID" value="CAA24921.1"/>
    <property type="molecule type" value="Genomic_DNA"/>
</dbReference>
<dbReference type="EMBL" id="AF158101">
    <property type="protein sequence ID" value="AAD42440.1"/>
    <property type="molecule type" value="Genomic_DNA"/>
</dbReference>
<dbReference type="PIR" id="A01201">
    <property type="entry name" value="LQBP34"/>
</dbReference>
<dbReference type="RefSeq" id="NP_049813.1">
    <property type="nucleotide sequence ID" value="NC_000866.4"/>
</dbReference>
<dbReference type="PDB" id="5WFY">
    <property type="method" value="X-ray"/>
    <property type="resolution" value="1.40 A"/>
    <property type="chains" value="A=1-129"/>
</dbReference>
<dbReference type="PDB" id="6DRT">
    <property type="method" value="X-ray"/>
    <property type="resolution" value="2.12 A"/>
    <property type="chains" value="D/E/F=225-237"/>
</dbReference>
<dbReference type="PDB" id="6DT1">
    <property type="method" value="X-ray"/>
    <property type="resolution" value="2.75 A"/>
    <property type="chains" value="A/E=1-487"/>
</dbReference>
<dbReference type="PDBsum" id="5WFY"/>
<dbReference type="PDBsum" id="6DRT"/>
<dbReference type="PDBsum" id="6DT1"/>
<dbReference type="SMR" id="P00970"/>
<dbReference type="BindingDB" id="P00970"/>
<dbReference type="ChEMBL" id="CHEMBL5733"/>
<dbReference type="GeneID" id="1258680"/>
<dbReference type="KEGG" id="vg:1258680"/>
<dbReference type="OrthoDB" id="4135at10239"/>
<dbReference type="PRO" id="PR:P00970"/>
<dbReference type="Proteomes" id="UP000009087">
    <property type="component" value="Segment"/>
</dbReference>
<dbReference type="GO" id="GO:0005524">
    <property type="term" value="F:ATP binding"/>
    <property type="evidence" value="ECO:0007669"/>
    <property type="project" value="UniProtKB-KW"/>
</dbReference>
<dbReference type="GO" id="GO:0003910">
    <property type="term" value="F:DNA ligase (ATP) activity"/>
    <property type="evidence" value="ECO:0007669"/>
    <property type="project" value="UniProtKB-EC"/>
</dbReference>
<dbReference type="GO" id="GO:0003909">
    <property type="term" value="F:DNA ligase activity"/>
    <property type="evidence" value="ECO:0000314"/>
    <property type="project" value="CACAO"/>
</dbReference>
<dbReference type="GO" id="GO:0046872">
    <property type="term" value="F:metal ion binding"/>
    <property type="evidence" value="ECO:0007669"/>
    <property type="project" value="UniProtKB-KW"/>
</dbReference>
<dbReference type="GO" id="GO:0006310">
    <property type="term" value="P:DNA recombination"/>
    <property type="evidence" value="ECO:0007669"/>
    <property type="project" value="UniProtKB-KW"/>
</dbReference>
<dbReference type="GO" id="GO:0006281">
    <property type="term" value="P:DNA repair"/>
    <property type="evidence" value="ECO:0007669"/>
    <property type="project" value="UniProtKB-KW"/>
</dbReference>
<dbReference type="GO" id="GO:0006260">
    <property type="term" value="P:DNA replication"/>
    <property type="evidence" value="ECO:0007669"/>
    <property type="project" value="UniProtKB-KW"/>
</dbReference>
<dbReference type="Gene3D" id="3.30.470.30">
    <property type="entry name" value="DNA ligase/mRNA capping enzyme"/>
    <property type="match status" value="1"/>
</dbReference>
<dbReference type="InterPro" id="IPR012310">
    <property type="entry name" value="DNA_ligase_ATP-dep_cent"/>
</dbReference>
<dbReference type="InterPro" id="IPR016059">
    <property type="entry name" value="DNA_ligase_ATP-dep_CS"/>
</dbReference>
<dbReference type="InterPro" id="IPR012340">
    <property type="entry name" value="NA-bd_OB-fold"/>
</dbReference>
<dbReference type="InterPro" id="IPR050326">
    <property type="entry name" value="NAD_dep_DNA_ligaseB"/>
</dbReference>
<dbReference type="PANTHER" id="PTHR47810">
    <property type="entry name" value="DNA LIGASE"/>
    <property type="match status" value="1"/>
</dbReference>
<dbReference type="PANTHER" id="PTHR47810:SF1">
    <property type="entry name" value="DNA LIGASE B"/>
    <property type="match status" value="1"/>
</dbReference>
<dbReference type="Pfam" id="PF01068">
    <property type="entry name" value="DNA_ligase_A_M"/>
    <property type="match status" value="1"/>
</dbReference>
<dbReference type="SUPFAM" id="SSF56091">
    <property type="entry name" value="DNA ligase/mRNA capping enzyme, catalytic domain"/>
    <property type="match status" value="1"/>
</dbReference>
<dbReference type="SUPFAM" id="SSF50249">
    <property type="entry name" value="Nucleic acid-binding proteins"/>
    <property type="match status" value="1"/>
</dbReference>
<dbReference type="PROSITE" id="PS00697">
    <property type="entry name" value="DNA_LIGASE_A1"/>
    <property type="match status" value="1"/>
</dbReference>
<dbReference type="PROSITE" id="PS00333">
    <property type="entry name" value="DNA_LIGASE_A2"/>
    <property type="match status" value="1"/>
</dbReference>